<organism evidence="8">
    <name type="scientific">Cryptococcus neoformans var. grubii serotype A (strain H99 / ATCC 208821 / CBS 10515 / FGSC 9487)</name>
    <name type="common">Filobasidiella neoformans var. grubii</name>
    <dbReference type="NCBI Taxonomy" id="235443"/>
    <lineage>
        <taxon>Eukaryota</taxon>
        <taxon>Fungi</taxon>
        <taxon>Dikarya</taxon>
        <taxon>Basidiomycota</taxon>
        <taxon>Agaricomycotina</taxon>
        <taxon>Tremellomycetes</taxon>
        <taxon>Tremellales</taxon>
        <taxon>Cryptococcaceae</taxon>
        <taxon>Cryptococcus</taxon>
        <taxon>Cryptococcus neoformans species complex</taxon>
    </lineage>
</organism>
<feature type="chain" id="PRO_0000454228" description="Chromatin-associated protein SWI6">
    <location>
        <begin position="1"/>
        <end position="222"/>
    </location>
</feature>
<feature type="domain" description="Chromo" evidence="2">
    <location>
        <begin position="28"/>
        <end position="87"/>
    </location>
</feature>
<feature type="region of interest" description="Disordered" evidence="3">
    <location>
        <begin position="1"/>
        <end position="26"/>
    </location>
</feature>
<feature type="region of interest" description="Disordered" evidence="3">
    <location>
        <begin position="77"/>
        <end position="147"/>
    </location>
</feature>
<feature type="compositionally biased region" description="Basic and acidic residues" evidence="3">
    <location>
        <begin position="1"/>
        <end position="15"/>
    </location>
</feature>
<feature type="compositionally biased region" description="Acidic residues" evidence="3">
    <location>
        <begin position="16"/>
        <end position="26"/>
    </location>
</feature>
<keyword id="KW-0539">Nucleus</keyword>
<protein>
    <recommendedName>
        <fullName evidence="6">Chromatin-associated protein SWI6</fullName>
    </recommendedName>
</protein>
<name>SWI6_CRYNH</name>
<sequence length="222" mass="25068">MPVIKKEELSQKKDLESEEEDSGLEDEYEVEKVIKHRGKGKNIEFLVRWKGYGPEYDTWEPTENVASAEEAVAAYWETQDKTATAPRKRGRQEAYTASQTSITPKPESSKQAAKKARTSTAENGIKASVDKGEGNDGASDDDIDRQYSGSLDKYSDLKSWENVVQNIETVEQGEGGQLIVYATMKGGEKVTIPTELAYKKCPLKCLYFYQKHLKWRPVDENE</sequence>
<accession>J9VQZ0</accession>
<proteinExistence type="evidence at protein level"/>
<dbReference type="EMBL" id="CP003827">
    <property type="protein sequence ID" value="AFR96683.2"/>
    <property type="molecule type" value="Genomic_DNA"/>
</dbReference>
<dbReference type="RefSeq" id="XP_012050961.1">
    <property type="nucleotide sequence ID" value="XM_012195571.1"/>
</dbReference>
<dbReference type="SMR" id="J9VQZ0"/>
<dbReference type="GeneID" id="23886963"/>
<dbReference type="KEGG" id="cng:CNAG_03458"/>
<dbReference type="VEuPathDB" id="FungiDB:CNAG_03458"/>
<dbReference type="HOGENOM" id="CLU_045874_5_0_1"/>
<dbReference type="OrthoDB" id="8078at5206"/>
<dbReference type="Proteomes" id="UP000010091">
    <property type="component" value="Chromosome 8"/>
</dbReference>
<dbReference type="GO" id="GO:0000792">
    <property type="term" value="C:heterochromatin"/>
    <property type="evidence" value="ECO:0007669"/>
    <property type="project" value="UniProtKB-ARBA"/>
</dbReference>
<dbReference type="GO" id="GO:0005634">
    <property type="term" value="C:nucleus"/>
    <property type="evidence" value="ECO:0007669"/>
    <property type="project" value="UniProtKB-SubCell"/>
</dbReference>
<dbReference type="GO" id="GO:0006338">
    <property type="term" value="P:chromatin remodeling"/>
    <property type="evidence" value="ECO:0007669"/>
    <property type="project" value="UniProtKB-ARBA"/>
</dbReference>
<dbReference type="GO" id="GO:0009889">
    <property type="term" value="P:regulation of biosynthetic process"/>
    <property type="evidence" value="ECO:0007669"/>
    <property type="project" value="UniProtKB-ARBA"/>
</dbReference>
<dbReference type="CDD" id="cd00024">
    <property type="entry name" value="CD_CSD"/>
    <property type="match status" value="1"/>
</dbReference>
<dbReference type="Gene3D" id="2.40.50.40">
    <property type="match status" value="2"/>
</dbReference>
<dbReference type="InterPro" id="IPR016197">
    <property type="entry name" value="Chromo-like_dom_sf"/>
</dbReference>
<dbReference type="InterPro" id="IPR000953">
    <property type="entry name" value="Chromo/chromo_shadow_dom"/>
</dbReference>
<dbReference type="InterPro" id="IPR017984">
    <property type="entry name" value="Chromo_dom_subgr"/>
</dbReference>
<dbReference type="InterPro" id="IPR023780">
    <property type="entry name" value="Chromo_domain"/>
</dbReference>
<dbReference type="InterPro" id="IPR008251">
    <property type="entry name" value="Chromo_shadow_dom"/>
</dbReference>
<dbReference type="InterPro" id="IPR023779">
    <property type="entry name" value="Chromodomain_CS"/>
</dbReference>
<dbReference type="InterPro" id="IPR051219">
    <property type="entry name" value="Heterochromatin_chromo-domain"/>
</dbReference>
<dbReference type="PANTHER" id="PTHR22812">
    <property type="entry name" value="CHROMOBOX PROTEIN"/>
    <property type="match status" value="1"/>
</dbReference>
<dbReference type="Pfam" id="PF00385">
    <property type="entry name" value="Chromo"/>
    <property type="match status" value="1"/>
</dbReference>
<dbReference type="Pfam" id="PF01393">
    <property type="entry name" value="Chromo_shadow"/>
    <property type="match status" value="1"/>
</dbReference>
<dbReference type="PRINTS" id="PR00504">
    <property type="entry name" value="CHROMODOMAIN"/>
</dbReference>
<dbReference type="SMART" id="SM00298">
    <property type="entry name" value="CHROMO"/>
    <property type="match status" value="1"/>
</dbReference>
<dbReference type="SMART" id="SM00300">
    <property type="entry name" value="ChSh"/>
    <property type="match status" value="1"/>
</dbReference>
<dbReference type="SUPFAM" id="SSF54160">
    <property type="entry name" value="Chromo domain-like"/>
    <property type="match status" value="2"/>
</dbReference>
<dbReference type="PROSITE" id="PS00598">
    <property type="entry name" value="CHROMO_1"/>
    <property type="match status" value="1"/>
</dbReference>
<dbReference type="PROSITE" id="PS50013">
    <property type="entry name" value="CHROMO_2"/>
    <property type="match status" value="1"/>
</dbReference>
<gene>
    <name evidence="5" type="primary">SWI6</name>
    <name evidence="7" type="ORF">CNAG_03458</name>
</gene>
<evidence type="ECO:0000250" key="1">
    <source>
        <dbReference type="UniProtKB" id="P40381"/>
    </source>
</evidence>
<evidence type="ECO:0000255" key="2">
    <source>
        <dbReference type="PROSITE-ProRule" id="PRU00053"/>
    </source>
</evidence>
<evidence type="ECO:0000256" key="3">
    <source>
        <dbReference type="SAM" id="MobiDB-lite"/>
    </source>
</evidence>
<evidence type="ECO:0000269" key="4">
    <source>
    </source>
</evidence>
<evidence type="ECO:0000303" key="5">
    <source>
    </source>
</evidence>
<evidence type="ECO:0000305" key="6"/>
<evidence type="ECO:0000312" key="7">
    <source>
        <dbReference type="EMBL" id="AFR96683.2"/>
    </source>
</evidence>
<evidence type="ECO:0000312" key="8">
    <source>
        <dbReference type="Proteomes" id="UP000010091"/>
    </source>
</evidence>
<reference evidence="8" key="1">
    <citation type="journal article" date="2014" name="PLoS Genet.">
        <title>Analysis of the genome and transcriptome of Cryptococcus neoformans var. grubii reveals complex RNA expression and microevolution leading to virulence attenuation.</title>
        <authorList>
            <person name="Janbon G."/>
            <person name="Ormerod K.L."/>
            <person name="Paulet D."/>
            <person name="Byrnes E.J. III"/>
            <person name="Yadav V."/>
            <person name="Chatterjee G."/>
            <person name="Mullapudi N."/>
            <person name="Hon C.-C."/>
            <person name="Billmyre R.B."/>
            <person name="Brunel F."/>
            <person name="Bahn Y.-S."/>
            <person name="Chen W."/>
            <person name="Chen Y."/>
            <person name="Chow E.W.L."/>
            <person name="Coppee J.-Y."/>
            <person name="Floyd-Averette A."/>
            <person name="Gaillardin C."/>
            <person name="Gerik K.J."/>
            <person name="Goldberg J."/>
            <person name="Gonzalez-Hilarion S."/>
            <person name="Gujja S."/>
            <person name="Hamlin J.L."/>
            <person name="Hsueh Y.-P."/>
            <person name="Ianiri G."/>
            <person name="Jones S."/>
            <person name="Kodira C.D."/>
            <person name="Kozubowski L."/>
            <person name="Lam W."/>
            <person name="Marra M."/>
            <person name="Mesner L.D."/>
            <person name="Mieczkowski P.A."/>
            <person name="Moyrand F."/>
            <person name="Nielsen K."/>
            <person name="Proux C."/>
            <person name="Rossignol T."/>
            <person name="Schein J.E."/>
            <person name="Sun S."/>
            <person name="Wollschlaeger C."/>
            <person name="Wood I.A."/>
            <person name="Zeng Q."/>
            <person name="Neuveglise C."/>
            <person name="Newlon C.S."/>
            <person name="Perfect J.R."/>
            <person name="Lodge J.K."/>
            <person name="Idnurm A."/>
            <person name="Stajich J.E."/>
            <person name="Kronstad J.W."/>
            <person name="Sanyal K."/>
            <person name="Heitman J."/>
            <person name="Fraser J.A."/>
            <person name="Cuomo C.A."/>
            <person name="Dietrich F.S."/>
        </authorList>
    </citation>
    <scope>NUCLEOTIDE SEQUENCE [LARGE SCALE GENOMIC DNA]</scope>
    <source>
        <strain evidence="8">H99 / ATCC 208821 / CBS 10515 / FGSC 9487</strain>
    </source>
</reference>
<reference evidence="6" key="2">
    <citation type="journal article" date="2020" name="Cell">
        <title>Evolutionary Persistence of DNA Methylation for Millions of Years after Ancient Loss of a De Novo Methyltransferase.</title>
        <authorList>
            <person name="Catania S."/>
            <person name="Dumesic P.A."/>
            <person name="Pimentel H."/>
            <person name="Nasif A."/>
            <person name="Stoddard C.I."/>
            <person name="Burke J.E."/>
            <person name="Diedrich J.K."/>
            <person name="Cook S."/>
            <person name="Shea T."/>
            <person name="Geinger E."/>
            <person name="Lintner R."/>
            <person name="Yates J.R. III"/>
            <person name="Hajkova P."/>
            <person name="Narlikar G.J."/>
            <person name="Cuomo C.A."/>
            <person name="Pritchard J.K."/>
            <person name="Madhani H.D."/>
        </authorList>
    </citation>
    <scope>FUNCTION</scope>
    <scope>INTERACTION WITH DMT5</scope>
    <scope>DISRUPTION PHENOTYPE</scope>
</reference>
<comment type="function">
    <text evidence="1 4">Recognizes and binds histone H3 tails methylated at 'Lys-9', leading to epigenetic repression (By similarity). Localizes DMT5 to heterochromatin characterized by trimethylation of histone H3 tails at 'Lys-9' (PubMed:31955845).</text>
</comment>
<comment type="subunit">
    <text evidence="4">Interacts with DMT5.</text>
</comment>
<comment type="subcellular location">
    <subcellularLocation>
        <location evidence="1">Nucleus</location>
    </subcellularLocation>
</comment>
<comment type="disruption phenotype">
    <text evidence="4">Mildly decreases methylation of the fifth carbon of cytosine (5mC) in DNA.</text>
</comment>